<sequence>MHALLLLLLLALGSALRSPQPPEARAKLCGHHLVRALVRVCGGPRWSPEATQPVDTRDRELLQWLEQRHLLHALVADADPALDPDPALDPQLPHQASQRQRRSVATNAVHRCCLTGCTQQDLLGLCPH</sequence>
<dbReference type="EMBL" id="AF139918">
    <property type="protein sequence ID" value="AAD33663.2"/>
    <property type="molecule type" value="mRNA"/>
</dbReference>
<dbReference type="EMBL" id="AF139920">
    <property type="protein sequence ID" value="AAD33851.1"/>
    <property type="molecule type" value="Genomic_DNA"/>
</dbReference>
<dbReference type="RefSeq" id="NP_446132.1">
    <property type="nucleotide sequence ID" value="NM_053680.2"/>
</dbReference>
<dbReference type="SMR" id="Q9WUK0"/>
<dbReference type="FunCoup" id="Q9WUK0">
    <property type="interactions" value="36"/>
</dbReference>
<dbReference type="STRING" id="10116.ENSRNOP00000025349"/>
<dbReference type="PaxDb" id="10116-ENSRNOP00000025349"/>
<dbReference type="Ensembl" id="ENSRNOT00000080146.2">
    <property type="protein sequence ID" value="ENSRNOP00000073659.2"/>
    <property type="gene ID" value="ENSRNOG00000068505.1"/>
</dbReference>
<dbReference type="GeneID" id="114215"/>
<dbReference type="KEGG" id="rno:114215"/>
<dbReference type="UCSC" id="RGD:620117">
    <property type="organism name" value="rat"/>
</dbReference>
<dbReference type="AGR" id="RGD:620117"/>
<dbReference type="CTD" id="3640"/>
<dbReference type="RGD" id="620117">
    <property type="gene designation" value="Insl3"/>
</dbReference>
<dbReference type="eggNOG" id="ENOG502TFQI">
    <property type="taxonomic scope" value="Eukaryota"/>
</dbReference>
<dbReference type="GeneTree" id="ENSGT00940000163613"/>
<dbReference type="HOGENOM" id="CLU_164865_0_0_1"/>
<dbReference type="InParanoid" id="Q9WUK0"/>
<dbReference type="OMA" id="NPAHHCC"/>
<dbReference type="OrthoDB" id="9448185at2759"/>
<dbReference type="PhylomeDB" id="Q9WUK0"/>
<dbReference type="TreeFam" id="TF106361"/>
<dbReference type="Reactome" id="R-RNO-444821">
    <property type="pathway name" value="Relaxin receptors"/>
</dbReference>
<dbReference type="PRO" id="PR:Q9WUK0"/>
<dbReference type="Proteomes" id="UP000002494">
    <property type="component" value="Chromosome 16"/>
</dbReference>
<dbReference type="Bgee" id="ENSRNOG00000018757">
    <property type="expression patterns" value="Expressed in testis and 11 other cell types or tissues"/>
</dbReference>
<dbReference type="GO" id="GO:0005615">
    <property type="term" value="C:extracellular space"/>
    <property type="evidence" value="ECO:0000314"/>
    <property type="project" value="RGD"/>
</dbReference>
<dbReference type="GO" id="GO:0048471">
    <property type="term" value="C:perinuclear region of cytoplasm"/>
    <property type="evidence" value="ECO:0000314"/>
    <property type="project" value="RGD"/>
</dbReference>
<dbReference type="GO" id="GO:0005179">
    <property type="term" value="F:hormone activity"/>
    <property type="evidence" value="ECO:0007669"/>
    <property type="project" value="UniProtKB-KW"/>
</dbReference>
<dbReference type="GO" id="GO:0002020">
    <property type="term" value="F:protease binding"/>
    <property type="evidence" value="ECO:0000266"/>
    <property type="project" value="RGD"/>
</dbReference>
<dbReference type="GO" id="GO:0007193">
    <property type="term" value="P:adenylate cyclase-inhibiting G protein-coupled receptor signaling pathway"/>
    <property type="evidence" value="ECO:0000314"/>
    <property type="project" value="RGD"/>
</dbReference>
<dbReference type="GO" id="GO:0001701">
    <property type="term" value="P:in utero embryonic development"/>
    <property type="evidence" value="ECO:0000266"/>
    <property type="project" value="RGD"/>
</dbReference>
<dbReference type="GO" id="GO:0008584">
    <property type="term" value="P:male gonad development"/>
    <property type="evidence" value="ECO:0000266"/>
    <property type="project" value="RGD"/>
</dbReference>
<dbReference type="GO" id="GO:0043066">
    <property type="term" value="P:negative regulation of apoptotic process"/>
    <property type="evidence" value="ECO:0000314"/>
    <property type="project" value="RGD"/>
</dbReference>
<dbReference type="GO" id="GO:0008285">
    <property type="term" value="P:negative regulation of cell population proliferation"/>
    <property type="evidence" value="ECO:0000314"/>
    <property type="project" value="RGD"/>
</dbReference>
<dbReference type="GO" id="GO:0001556">
    <property type="term" value="P:oocyte maturation"/>
    <property type="evidence" value="ECO:0000314"/>
    <property type="project" value="RGD"/>
</dbReference>
<dbReference type="GO" id="GO:0141163">
    <property type="term" value="P:positive regulation of cAMP/PKA signal transduction"/>
    <property type="evidence" value="ECO:0000314"/>
    <property type="project" value="RGD"/>
</dbReference>
<dbReference type="GO" id="GO:0008284">
    <property type="term" value="P:positive regulation of cell population proliferation"/>
    <property type="evidence" value="ECO:0000314"/>
    <property type="project" value="RGD"/>
</dbReference>
<dbReference type="GO" id="GO:0010634">
    <property type="term" value="P:positive regulation of epithelial cell migration"/>
    <property type="evidence" value="ECO:0000266"/>
    <property type="project" value="RGD"/>
</dbReference>
<dbReference type="GO" id="GO:0090303">
    <property type="term" value="P:positive regulation of wound healing"/>
    <property type="evidence" value="ECO:0000266"/>
    <property type="project" value="RGD"/>
</dbReference>
<dbReference type="GO" id="GO:2000018">
    <property type="term" value="P:regulation of male gonad development"/>
    <property type="evidence" value="ECO:0000266"/>
    <property type="project" value="RGD"/>
</dbReference>
<dbReference type="CDD" id="cd04365">
    <property type="entry name" value="IlGF_relaxin_like"/>
    <property type="match status" value="1"/>
</dbReference>
<dbReference type="Gene3D" id="1.10.100.10">
    <property type="entry name" value="Insulin-like"/>
    <property type="match status" value="1"/>
</dbReference>
<dbReference type="InterPro" id="IPR043387">
    <property type="entry name" value="INSL3/INSL4"/>
</dbReference>
<dbReference type="InterPro" id="IPR016179">
    <property type="entry name" value="Insulin-like"/>
</dbReference>
<dbReference type="InterPro" id="IPR036438">
    <property type="entry name" value="Insulin-like_sf"/>
</dbReference>
<dbReference type="InterPro" id="IPR022353">
    <property type="entry name" value="Insulin_CS"/>
</dbReference>
<dbReference type="InterPro" id="IPR022352">
    <property type="entry name" value="Insulin_family"/>
</dbReference>
<dbReference type="PANTHER" id="PTHR10423">
    <property type="entry name" value="INSULIN-LIKE 3"/>
    <property type="match status" value="1"/>
</dbReference>
<dbReference type="PANTHER" id="PTHR10423:SF3">
    <property type="entry name" value="INSULIN-LIKE 3"/>
    <property type="match status" value="1"/>
</dbReference>
<dbReference type="Pfam" id="PF00049">
    <property type="entry name" value="Insulin"/>
    <property type="match status" value="1"/>
</dbReference>
<dbReference type="PRINTS" id="PR00276">
    <property type="entry name" value="INSULINFAMLY"/>
</dbReference>
<dbReference type="SMART" id="SM00078">
    <property type="entry name" value="IlGF"/>
    <property type="match status" value="1"/>
</dbReference>
<dbReference type="SUPFAM" id="SSF56994">
    <property type="entry name" value="Insulin-like"/>
    <property type="match status" value="1"/>
</dbReference>
<dbReference type="PROSITE" id="PS00262">
    <property type="entry name" value="INSULIN"/>
    <property type="match status" value="1"/>
</dbReference>
<protein>
    <recommendedName>
        <fullName>Insulin-like 3</fullName>
    </recommendedName>
    <alternativeName>
        <fullName>Leydig insulin-like peptide</fullName>
        <shortName>Ley-I-L</shortName>
    </alternativeName>
    <alternativeName>
        <fullName>Relaxin-like factor</fullName>
    </alternativeName>
    <component>
        <recommendedName>
            <fullName>Insulin-like 3 B chain</fullName>
        </recommendedName>
    </component>
    <component>
        <recommendedName>
            <fullName>Insulin-like 3 A chain</fullName>
        </recommendedName>
    </component>
</protein>
<accession>Q9WUK0</accession>
<accession>Q9WUK1</accession>
<reference key="1">
    <citation type="journal article" date="1999" name="Mol. Reprod. Dev.">
        <title>Structure and expression of the rat relaxin-like factor (RLF) gene.</title>
        <authorList>
            <person name="Spiess A.-N."/>
            <person name="Balvers M."/>
            <person name="Tena-Sempere M."/>
            <person name="Huhtaniemi I."/>
            <person name="Parry L."/>
            <person name="Ivell R."/>
        </authorList>
    </citation>
    <scope>NUCLEOTIDE SEQUENCE [GENOMIC DNA / MRNA]</scope>
    <scope>TISSUE SPECIFICITY</scope>
    <scope>DEVELOPMENTAL STAGE</scope>
    <source>
        <strain>Sprague-Dawley</strain>
        <tissue>Testis</tissue>
    </source>
</reference>
<organism>
    <name type="scientific">Rattus norvegicus</name>
    <name type="common">Rat</name>
    <dbReference type="NCBI Taxonomy" id="10116"/>
    <lineage>
        <taxon>Eukaryota</taxon>
        <taxon>Metazoa</taxon>
        <taxon>Chordata</taxon>
        <taxon>Craniata</taxon>
        <taxon>Vertebrata</taxon>
        <taxon>Euteleostomi</taxon>
        <taxon>Mammalia</taxon>
        <taxon>Eutheria</taxon>
        <taxon>Euarchontoglires</taxon>
        <taxon>Glires</taxon>
        <taxon>Rodentia</taxon>
        <taxon>Myomorpha</taxon>
        <taxon>Muroidea</taxon>
        <taxon>Muridae</taxon>
        <taxon>Murinae</taxon>
        <taxon>Rattus</taxon>
    </lineage>
</organism>
<evidence type="ECO:0000250" key="1"/>
<evidence type="ECO:0000255" key="2"/>
<evidence type="ECO:0000256" key="3">
    <source>
        <dbReference type="SAM" id="MobiDB-lite"/>
    </source>
</evidence>
<evidence type="ECO:0000269" key="4">
    <source>
    </source>
</evidence>
<evidence type="ECO:0000305" key="5"/>
<comment type="function">
    <text evidence="1">Seems to play a role in testicular function. May be a trophic hormone with a role in testicular descent in fetal life. Is a ligand for LGR8 receptor (By similarity).</text>
</comment>
<comment type="subunit">
    <text evidence="1">Heterodimer of a B chain and an A chain linked by two disulfide bonds.</text>
</comment>
<comment type="subcellular location">
    <subcellularLocation>
        <location>Secreted</location>
    </subcellularLocation>
</comment>
<comment type="tissue specificity">
    <text evidence="4">Expressed in Leydig cells of the testis, and weakly in the theca interna cells of antral follicles and the corpus luteum of the ovary.</text>
</comment>
<comment type="developmental stage">
    <text evidence="4">Highly expressed in adult testis and low expression in the ovary. Highly up-regulated in testes of day 19 embryos, but not in later neonatal stages, nor any ovarian tissue from this period.</text>
</comment>
<comment type="similarity">
    <text evidence="5">Belongs to the insulin family.</text>
</comment>
<gene>
    <name type="primary">Insl3</name>
    <name type="synonym">Rlf</name>
</gene>
<feature type="signal peptide" evidence="2">
    <location>
        <begin position="1"/>
        <end position="15"/>
    </location>
</feature>
<feature type="peptide" id="PRO_0000016152" description="Insulin-like 3 B chain">
    <location>
        <begin position="16"/>
        <end status="unknown"/>
    </location>
</feature>
<feature type="propeptide" id="PRO_0000016153" description="C peptide like" evidence="2">
    <location>
        <begin status="unknown"/>
        <end position="100"/>
    </location>
</feature>
<feature type="peptide" id="PRO_0000016154" description="Insulin-like 3 A chain">
    <location>
        <begin position="103"/>
        <end position="128"/>
    </location>
</feature>
<feature type="region of interest" description="Disordered" evidence="3">
    <location>
        <begin position="81"/>
        <end position="101"/>
    </location>
</feature>
<feature type="compositionally biased region" description="Low complexity" evidence="3">
    <location>
        <begin position="81"/>
        <end position="94"/>
    </location>
</feature>
<feature type="disulfide bond" description="Interchain (between B and A chains)" evidence="1">
    <location>
        <begin position="29"/>
        <end position="113"/>
    </location>
</feature>
<feature type="disulfide bond" description="Interchain (between B and A chains)" evidence="1">
    <location>
        <begin position="41"/>
        <end position="126"/>
    </location>
</feature>
<feature type="disulfide bond" evidence="1">
    <location>
        <begin position="112"/>
        <end position="117"/>
    </location>
</feature>
<keyword id="KW-0165">Cleavage on pair of basic residues</keyword>
<keyword id="KW-1015">Disulfide bond</keyword>
<keyword id="KW-0372">Hormone</keyword>
<keyword id="KW-1185">Reference proteome</keyword>
<keyword id="KW-0964">Secreted</keyword>
<keyword id="KW-0732">Signal</keyword>
<proteinExistence type="evidence at transcript level"/>
<name>INSL3_RAT</name>